<dbReference type="EMBL" id="CP001096">
    <property type="protein sequence ID" value="ACF03344.1"/>
    <property type="molecule type" value="Genomic_DNA"/>
</dbReference>
<dbReference type="RefSeq" id="WP_012497571.1">
    <property type="nucleotide sequence ID" value="NC_011004.1"/>
</dbReference>
<dbReference type="SMR" id="B3Q7Y9"/>
<dbReference type="KEGG" id="rpt:Rpal_4855"/>
<dbReference type="HOGENOM" id="CLU_004131_4_2_5"/>
<dbReference type="OrthoDB" id="9763467at2"/>
<dbReference type="Proteomes" id="UP000001725">
    <property type="component" value="Chromosome"/>
</dbReference>
<dbReference type="GO" id="GO:0032300">
    <property type="term" value="C:mismatch repair complex"/>
    <property type="evidence" value="ECO:0007669"/>
    <property type="project" value="InterPro"/>
</dbReference>
<dbReference type="GO" id="GO:0005524">
    <property type="term" value="F:ATP binding"/>
    <property type="evidence" value="ECO:0007669"/>
    <property type="project" value="InterPro"/>
</dbReference>
<dbReference type="GO" id="GO:0016887">
    <property type="term" value="F:ATP hydrolysis activity"/>
    <property type="evidence" value="ECO:0007669"/>
    <property type="project" value="InterPro"/>
</dbReference>
<dbReference type="GO" id="GO:0140664">
    <property type="term" value="F:ATP-dependent DNA damage sensor activity"/>
    <property type="evidence" value="ECO:0007669"/>
    <property type="project" value="InterPro"/>
</dbReference>
<dbReference type="GO" id="GO:0030983">
    <property type="term" value="F:mismatched DNA binding"/>
    <property type="evidence" value="ECO:0007669"/>
    <property type="project" value="InterPro"/>
</dbReference>
<dbReference type="GO" id="GO:0006298">
    <property type="term" value="P:mismatch repair"/>
    <property type="evidence" value="ECO:0007669"/>
    <property type="project" value="UniProtKB-UniRule"/>
</dbReference>
<dbReference type="CDD" id="cd16926">
    <property type="entry name" value="HATPase_MutL-MLH-PMS-like"/>
    <property type="match status" value="1"/>
</dbReference>
<dbReference type="CDD" id="cd00782">
    <property type="entry name" value="MutL_Trans"/>
    <property type="match status" value="1"/>
</dbReference>
<dbReference type="FunFam" id="3.30.565.10:FF:000003">
    <property type="entry name" value="DNA mismatch repair endonuclease MutL"/>
    <property type="match status" value="1"/>
</dbReference>
<dbReference type="Gene3D" id="3.30.230.10">
    <property type="match status" value="1"/>
</dbReference>
<dbReference type="Gene3D" id="3.30.565.10">
    <property type="entry name" value="Histidine kinase-like ATPase, C-terminal domain"/>
    <property type="match status" value="1"/>
</dbReference>
<dbReference type="Gene3D" id="3.30.1540.20">
    <property type="entry name" value="MutL, C-terminal domain, dimerisation subdomain"/>
    <property type="match status" value="1"/>
</dbReference>
<dbReference type="Gene3D" id="3.30.1370.100">
    <property type="entry name" value="MutL, C-terminal domain, regulatory subdomain"/>
    <property type="match status" value="1"/>
</dbReference>
<dbReference type="HAMAP" id="MF_00149">
    <property type="entry name" value="DNA_mis_repair"/>
    <property type="match status" value="1"/>
</dbReference>
<dbReference type="InterPro" id="IPR014762">
    <property type="entry name" value="DNA_mismatch_repair_CS"/>
</dbReference>
<dbReference type="InterPro" id="IPR020667">
    <property type="entry name" value="DNA_mismatch_repair_MutL"/>
</dbReference>
<dbReference type="InterPro" id="IPR013507">
    <property type="entry name" value="DNA_mismatch_S5_2-like"/>
</dbReference>
<dbReference type="InterPro" id="IPR036890">
    <property type="entry name" value="HATPase_C_sf"/>
</dbReference>
<dbReference type="InterPro" id="IPR002099">
    <property type="entry name" value="MutL/Mlh/PMS"/>
</dbReference>
<dbReference type="InterPro" id="IPR038973">
    <property type="entry name" value="MutL/Mlh/Pms-like"/>
</dbReference>
<dbReference type="InterPro" id="IPR014790">
    <property type="entry name" value="MutL_C"/>
</dbReference>
<dbReference type="InterPro" id="IPR042120">
    <property type="entry name" value="MutL_C_dimsub"/>
</dbReference>
<dbReference type="InterPro" id="IPR042121">
    <property type="entry name" value="MutL_C_regsub"/>
</dbReference>
<dbReference type="InterPro" id="IPR037198">
    <property type="entry name" value="MutL_C_sf"/>
</dbReference>
<dbReference type="InterPro" id="IPR020568">
    <property type="entry name" value="Ribosomal_Su5_D2-typ_SF"/>
</dbReference>
<dbReference type="InterPro" id="IPR014721">
    <property type="entry name" value="Ribsml_uS5_D2-typ_fold_subgr"/>
</dbReference>
<dbReference type="NCBIfam" id="TIGR00585">
    <property type="entry name" value="mutl"/>
    <property type="match status" value="1"/>
</dbReference>
<dbReference type="NCBIfam" id="NF000953">
    <property type="entry name" value="PRK00095.2-4"/>
    <property type="match status" value="1"/>
</dbReference>
<dbReference type="PANTHER" id="PTHR10073">
    <property type="entry name" value="DNA MISMATCH REPAIR PROTEIN MLH, PMS, MUTL"/>
    <property type="match status" value="1"/>
</dbReference>
<dbReference type="PANTHER" id="PTHR10073:SF12">
    <property type="entry name" value="DNA MISMATCH REPAIR PROTEIN MLH1"/>
    <property type="match status" value="1"/>
</dbReference>
<dbReference type="Pfam" id="PF01119">
    <property type="entry name" value="DNA_mis_repair"/>
    <property type="match status" value="1"/>
</dbReference>
<dbReference type="Pfam" id="PF13589">
    <property type="entry name" value="HATPase_c_3"/>
    <property type="match status" value="1"/>
</dbReference>
<dbReference type="Pfam" id="PF08676">
    <property type="entry name" value="MutL_C"/>
    <property type="match status" value="1"/>
</dbReference>
<dbReference type="SMART" id="SM01340">
    <property type="entry name" value="DNA_mis_repair"/>
    <property type="match status" value="1"/>
</dbReference>
<dbReference type="SMART" id="SM00853">
    <property type="entry name" value="MutL_C"/>
    <property type="match status" value="1"/>
</dbReference>
<dbReference type="SUPFAM" id="SSF55874">
    <property type="entry name" value="ATPase domain of HSP90 chaperone/DNA topoisomerase II/histidine kinase"/>
    <property type="match status" value="1"/>
</dbReference>
<dbReference type="SUPFAM" id="SSF118116">
    <property type="entry name" value="DNA mismatch repair protein MutL"/>
    <property type="match status" value="1"/>
</dbReference>
<dbReference type="SUPFAM" id="SSF54211">
    <property type="entry name" value="Ribosomal protein S5 domain 2-like"/>
    <property type="match status" value="1"/>
</dbReference>
<dbReference type="PROSITE" id="PS00058">
    <property type="entry name" value="DNA_MISMATCH_REPAIR_1"/>
    <property type="match status" value="1"/>
</dbReference>
<keyword id="KW-0227">DNA damage</keyword>
<keyword id="KW-0234">DNA repair</keyword>
<reference key="1">
    <citation type="submission" date="2008-05" db="EMBL/GenBank/DDBJ databases">
        <title>Complete sequence of Rhodopseudomonas palustris TIE-1.</title>
        <authorList>
            <consortium name="US DOE Joint Genome Institute"/>
            <person name="Lucas S."/>
            <person name="Copeland A."/>
            <person name="Lapidus A."/>
            <person name="Glavina del Rio T."/>
            <person name="Dalin E."/>
            <person name="Tice H."/>
            <person name="Pitluck S."/>
            <person name="Chain P."/>
            <person name="Malfatti S."/>
            <person name="Shin M."/>
            <person name="Vergez L."/>
            <person name="Lang D."/>
            <person name="Schmutz J."/>
            <person name="Larimer F."/>
            <person name="Land M."/>
            <person name="Hauser L."/>
            <person name="Kyrpides N."/>
            <person name="Mikhailova N."/>
            <person name="Emerson D."/>
            <person name="Newman D.K."/>
            <person name="Roden E."/>
            <person name="Richardson P."/>
        </authorList>
    </citation>
    <scope>NUCLEOTIDE SEQUENCE [LARGE SCALE GENOMIC DNA]</scope>
    <source>
        <strain>TIE-1</strain>
    </source>
</reference>
<name>MUTL_RHOPT</name>
<evidence type="ECO:0000255" key="1">
    <source>
        <dbReference type="HAMAP-Rule" id="MF_00149"/>
    </source>
</evidence>
<accession>B3Q7Y9</accession>
<sequence length="595" mass="64247">MPVRQLPEIIVNRIAAGEVVERPASVVKELVENAIDAGSSRIDIFSDGGGRRKIVIADDGSGMTAADLALAVDRHATSKLDDEDLLQIRTLGFRGEALPSIGAVAKLSITTRHASEPHAWTLRVEGGDKTPIAPAALSQGTRVEVADLFFATPARLKFLKTDRTEAEAIREVVRRLAMARPDIAFTLAGEERAPVTWAAALPGAPGQLIRLGDILGADFRANAIEVRAEREGVVVEGFAASPALTKANALGQYLFVNGRPVRDKLILGAVRAAYSDYLPRDRHPVVALFVTLDSREVDANVHPAKTEVRFRNAGLVRALIVHALKDGLAREGRRTAANSAGSVISTFRPASMPPANWDWRASPSYPVGGSAAPSFAERAQAAFDVGAPSADIRPTEVTPDLLDRPLGAARTQIHETYIVSQTRDGLIVVDQHAAHERIVYERLKASLEANGVQRQILLIPDIVEMDEATVERLVARGEELAKFGLVIESFGPGAVAVRETPSLLGKTDAGGLLRDLAEHMAEWDEALPLERRLMHVAATMACHGSVRAGRVLKPEEMNALLREMEATPNSGQCNHGRPTYVELTLTDIEKLFGRR</sequence>
<organism>
    <name type="scientific">Rhodopseudomonas palustris (strain TIE-1)</name>
    <dbReference type="NCBI Taxonomy" id="395960"/>
    <lineage>
        <taxon>Bacteria</taxon>
        <taxon>Pseudomonadati</taxon>
        <taxon>Pseudomonadota</taxon>
        <taxon>Alphaproteobacteria</taxon>
        <taxon>Hyphomicrobiales</taxon>
        <taxon>Nitrobacteraceae</taxon>
        <taxon>Rhodopseudomonas</taxon>
    </lineage>
</organism>
<proteinExistence type="inferred from homology"/>
<protein>
    <recommendedName>
        <fullName evidence="1">DNA mismatch repair protein MutL</fullName>
    </recommendedName>
</protein>
<feature type="chain" id="PRO_1000096678" description="DNA mismatch repair protein MutL">
    <location>
        <begin position="1"/>
        <end position="595"/>
    </location>
</feature>
<gene>
    <name evidence="1" type="primary">mutL</name>
    <name type="ordered locus">Rpal_4855</name>
</gene>
<comment type="function">
    <text evidence="1">This protein is involved in the repair of mismatches in DNA. It is required for dam-dependent methyl-directed DNA mismatch repair. May act as a 'molecular matchmaker', a protein that promotes the formation of a stable complex between two or more DNA-binding proteins in an ATP-dependent manner without itself being part of a final effector complex.</text>
</comment>
<comment type="similarity">
    <text evidence="1">Belongs to the DNA mismatch repair MutL/HexB family.</text>
</comment>